<name>PXL2C_MOUSE</name>
<gene>
    <name type="primary">Prxl2c</name>
    <name type="synonym">Aaed1</name>
</gene>
<protein>
    <recommendedName>
        <fullName evidence="3">Peroxiredoxin-like 2C</fullName>
    </recommendedName>
    <alternativeName>
        <fullName>AhpC/TSA antioxidant enzyme domain-containing protein 1</fullName>
    </alternativeName>
    <alternativeName>
        <fullName>Thioredoxin-like protein AAED1</fullName>
    </alternativeName>
</protein>
<feature type="chain" id="PRO_0000221625" description="Peroxiredoxin-like 2C">
    <location>
        <begin position="1"/>
        <end position="226"/>
    </location>
</feature>
<feature type="region of interest" description="Disordered" evidence="2">
    <location>
        <begin position="1"/>
        <end position="24"/>
    </location>
</feature>
<reference key="1">
    <citation type="journal article" date="2005" name="Science">
        <title>The transcriptional landscape of the mammalian genome.</title>
        <authorList>
            <person name="Carninci P."/>
            <person name="Kasukawa T."/>
            <person name="Katayama S."/>
            <person name="Gough J."/>
            <person name="Frith M.C."/>
            <person name="Maeda N."/>
            <person name="Oyama R."/>
            <person name="Ravasi T."/>
            <person name="Lenhard B."/>
            <person name="Wells C."/>
            <person name="Kodzius R."/>
            <person name="Shimokawa K."/>
            <person name="Bajic V.B."/>
            <person name="Brenner S.E."/>
            <person name="Batalov S."/>
            <person name="Forrest A.R."/>
            <person name="Zavolan M."/>
            <person name="Davis M.J."/>
            <person name="Wilming L.G."/>
            <person name="Aidinis V."/>
            <person name="Allen J.E."/>
            <person name="Ambesi-Impiombato A."/>
            <person name="Apweiler R."/>
            <person name="Aturaliya R.N."/>
            <person name="Bailey T.L."/>
            <person name="Bansal M."/>
            <person name="Baxter L."/>
            <person name="Beisel K.W."/>
            <person name="Bersano T."/>
            <person name="Bono H."/>
            <person name="Chalk A.M."/>
            <person name="Chiu K.P."/>
            <person name="Choudhary V."/>
            <person name="Christoffels A."/>
            <person name="Clutterbuck D.R."/>
            <person name="Crowe M.L."/>
            <person name="Dalla E."/>
            <person name="Dalrymple B.P."/>
            <person name="de Bono B."/>
            <person name="Della Gatta G."/>
            <person name="di Bernardo D."/>
            <person name="Down T."/>
            <person name="Engstrom P."/>
            <person name="Fagiolini M."/>
            <person name="Faulkner G."/>
            <person name="Fletcher C.F."/>
            <person name="Fukushima T."/>
            <person name="Furuno M."/>
            <person name="Futaki S."/>
            <person name="Gariboldi M."/>
            <person name="Georgii-Hemming P."/>
            <person name="Gingeras T.R."/>
            <person name="Gojobori T."/>
            <person name="Green R.E."/>
            <person name="Gustincich S."/>
            <person name="Harbers M."/>
            <person name="Hayashi Y."/>
            <person name="Hensch T.K."/>
            <person name="Hirokawa N."/>
            <person name="Hill D."/>
            <person name="Huminiecki L."/>
            <person name="Iacono M."/>
            <person name="Ikeo K."/>
            <person name="Iwama A."/>
            <person name="Ishikawa T."/>
            <person name="Jakt M."/>
            <person name="Kanapin A."/>
            <person name="Katoh M."/>
            <person name="Kawasawa Y."/>
            <person name="Kelso J."/>
            <person name="Kitamura H."/>
            <person name="Kitano H."/>
            <person name="Kollias G."/>
            <person name="Krishnan S.P."/>
            <person name="Kruger A."/>
            <person name="Kummerfeld S.K."/>
            <person name="Kurochkin I.V."/>
            <person name="Lareau L.F."/>
            <person name="Lazarevic D."/>
            <person name="Lipovich L."/>
            <person name="Liu J."/>
            <person name="Liuni S."/>
            <person name="McWilliam S."/>
            <person name="Madan Babu M."/>
            <person name="Madera M."/>
            <person name="Marchionni L."/>
            <person name="Matsuda H."/>
            <person name="Matsuzawa S."/>
            <person name="Miki H."/>
            <person name="Mignone F."/>
            <person name="Miyake S."/>
            <person name="Morris K."/>
            <person name="Mottagui-Tabar S."/>
            <person name="Mulder N."/>
            <person name="Nakano N."/>
            <person name="Nakauchi H."/>
            <person name="Ng P."/>
            <person name="Nilsson R."/>
            <person name="Nishiguchi S."/>
            <person name="Nishikawa S."/>
            <person name="Nori F."/>
            <person name="Ohara O."/>
            <person name="Okazaki Y."/>
            <person name="Orlando V."/>
            <person name="Pang K.C."/>
            <person name="Pavan W.J."/>
            <person name="Pavesi G."/>
            <person name="Pesole G."/>
            <person name="Petrovsky N."/>
            <person name="Piazza S."/>
            <person name="Reed J."/>
            <person name="Reid J.F."/>
            <person name="Ring B.Z."/>
            <person name="Ringwald M."/>
            <person name="Rost B."/>
            <person name="Ruan Y."/>
            <person name="Salzberg S.L."/>
            <person name="Sandelin A."/>
            <person name="Schneider C."/>
            <person name="Schoenbach C."/>
            <person name="Sekiguchi K."/>
            <person name="Semple C.A."/>
            <person name="Seno S."/>
            <person name="Sessa L."/>
            <person name="Sheng Y."/>
            <person name="Shibata Y."/>
            <person name="Shimada H."/>
            <person name="Shimada K."/>
            <person name="Silva D."/>
            <person name="Sinclair B."/>
            <person name="Sperling S."/>
            <person name="Stupka E."/>
            <person name="Sugiura K."/>
            <person name="Sultana R."/>
            <person name="Takenaka Y."/>
            <person name="Taki K."/>
            <person name="Tammoja K."/>
            <person name="Tan S.L."/>
            <person name="Tang S."/>
            <person name="Taylor M.S."/>
            <person name="Tegner J."/>
            <person name="Teichmann S.A."/>
            <person name="Ueda H.R."/>
            <person name="van Nimwegen E."/>
            <person name="Verardo R."/>
            <person name="Wei C.L."/>
            <person name="Yagi K."/>
            <person name="Yamanishi H."/>
            <person name="Zabarovsky E."/>
            <person name="Zhu S."/>
            <person name="Zimmer A."/>
            <person name="Hide W."/>
            <person name="Bult C."/>
            <person name="Grimmond S.M."/>
            <person name="Teasdale R.D."/>
            <person name="Liu E.T."/>
            <person name="Brusic V."/>
            <person name="Quackenbush J."/>
            <person name="Wahlestedt C."/>
            <person name="Mattick J.S."/>
            <person name="Hume D.A."/>
            <person name="Kai C."/>
            <person name="Sasaki D."/>
            <person name="Tomaru Y."/>
            <person name="Fukuda S."/>
            <person name="Kanamori-Katayama M."/>
            <person name="Suzuki M."/>
            <person name="Aoki J."/>
            <person name="Arakawa T."/>
            <person name="Iida J."/>
            <person name="Imamura K."/>
            <person name="Itoh M."/>
            <person name="Kato T."/>
            <person name="Kawaji H."/>
            <person name="Kawagashira N."/>
            <person name="Kawashima T."/>
            <person name="Kojima M."/>
            <person name="Kondo S."/>
            <person name="Konno H."/>
            <person name="Nakano K."/>
            <person name="Ninomiya N."/>
            <person name="Nishio T."/>
            <person name="Okada M."/>
            <person name="Plessy C."/>
            <person name="Shibata K."/>
            <person name="Shiraki T."/>
            <person name="Suzuki S."/>
            <person name="Tagami M."/>
            <person name="Waki K."/>
            <person name="Watahiki A."/>
            <person name="Okamura-Oho Y."/>
            <person name="Suzuki H."/>
            <person name="Kawai J."/>
            <person name="Hayashizaki Y."/>
        </authorList>
    </citation>
    <scope>NUCLEOTIDE SEQUENCE [LARGE SCALE MRNA]</scope>
    <source>
        <strain>C57BL/6J</strain>
        <tissue>Embryo</tissue>
    </source>
</reference>
<keyword id="KW-1185">Reference proteome</keyword>
<accession>Q9D1A0</accession>
<accession>Q3UFP2</accession>
<accession>Q9CVT8</accession>
<organism>
    <name type="scientific">Mus musculus</name>
    <name type="common">Mouse</name>
    <dbReference type="NCBI Taxonomy" id="10090"/>
    <lineage>
        <taxon>Eukaryota</taxon>
        <taxon>Metazoa</taxon>
        <taxon>Chordata</taxon>
        <taxon>Craniata</taxon>
        <taxon>Vertebrata</taxon>
        <taxon>Euteleostomi</taxon>
        <taxon>Mammalia</taxon>
        <taxon>Eutheria</taxon>
        <taxon>Euarchontoglires</taxon>
        <taxon>Glires</taxon>
        <taxon>Rodentia</taxon>
        <taxon>Myomorpha</taxon>
        <taxon>Muroidea</taxon>
        <taxon>Muridae</taxon>
        <taxon>Murinae</taxon>
        <taxon>Mus</taxon>
        <taxon>Mus</taxon>
    </lineage>
</organism>
<dbReference type="EMBL" id="AK003782">
    <property type="protein sequence ID" value="BAB22993.1"/>
    <property type="molecule type" value="mRNA"/>
</dbReference>
<dbReference type="EMBL" id="AK006589">
    <property type="protein sequence ID" value="BAB24662.1"/>
    <property type="molecule type" value="mRNA"/>
</dbReference>
<dbReference type="EMBL" id="AK148379">
    <property type="protein sequence ID" value="BAE28518.1"/>
    <property type="molecule type" value="mRNA"/>
</dbReference>
<dbReference type="CCDS" id="CCDS26599.1"/>
<dbReference type="RefSeq" id="NP_079646.1">
    <property type="nucleotide sequence ID" value="NM_025370.3"/>
</dbReference>
<dbReference type="BioGRID" id="211237">
    <property type="interactions" value="1"/>
</dbReference>
<dbReference type="FunCoup" id="Q9D1A0">
    <property type="interactions" value="1"/>
</dbReference>
<dbReference type="STRING" id="10090.ENSMUSP00000152323"/>
<dbReference type="iPTMnet" id="Q9D1A0"/>
<dbReference type="PhosphoSitePlus" id="Q9D1A0"/>
<dbReference type="PaxDb" id="10090-ENSMUSP00000021938"/>
<dbReference type="ProteomicsDB" id="286009"/>
<dbReference type="Pumba" id="Q9D1A0"/>
<dbReference type="Antibodypedia" id="14235">
    <property type="antibodies" value="39 antibodies from 8 providers"/>
</dbReference>
<dbReference type="DNASU" id="66129"/>
<dbReference type="Ensembl" id="ENSMUST00000222570.2">
    <property type="protein sequence ID" value="ENSMUSP00000152323.2"/>
    <property type="gene ID" value="ENSMUSG00000021482.11"/>
</dbReference>
<dbReference type="GeneID" id="66129"/>
<dbReference type="KEGG" id="mmu:66129"/>
<dbReference type="UCSC" id="uc007qyt.1">
    <property type="organism name" value="mouse"/>
</dbReference>
<dbReference type="AGR" id="MGI:1913379"/>
<dbReference type="CTD" id="195827"/>
<dbReference type="MGI" id="MGI:1913379">
    <property type="gene designation" value="Prxl2c"/>
</dbReference>
<dbReference type="VEuPathDB" id="HostDB:ENSMUSG00000021482"/>
<dbReference type="eggNOG" id="KOG4498">
    <property type="taxonomic scope" value="Eukaryota"/>
</dbReference>
<dbReference type="GeneTree" id="ENSGT00510000048363"/>
<dbReference type="HOGENOM" id="CLU_035338_2_0_1"/>
<dbReference type="InParanoid" id="Q9D1A0"/>
<dbReference type="OMA" id="MQNTVDH"/>
<dbReference type="OrthoDB" id="40334at2759"/>
<dbReference type="PhylomeDB" id="Q9D1A0"/>
<dbReference type="TreeFam" id="TF329293"/>
<dbReference type="BioGRID-ORCS" id="66129">
    <property type="hits" value="2 hits in 77 CRISPR screens"/>
</dbReference>
<dbReference type="ChiTaRS" id="Prxl2c">
    <property type="organism name" value="mouse"/>
</dbReference>
<dbReference type="PRO" id="PR:Q9D1A0"/>
<dbReference type="Proteomes" id="UP000000589">
    <property type="component" value="Chromosome 13"/>
</dbReference>
<dbReference type="RNAct" id="Q9D1A0">
    <property type="molecule type" value="protein"/>
</dbReference>
<dbReference type="Bgee" id="ENSMUSG00000021482">
    <property type="expression patterns" value="Expressed in iris and 216 other cell types or tissues"/>
</dbReference>
<dbReference type="ExpressionAtlas" id="Q9D1A0">
    <property type="expression patterns" value="baseline and differential"/>
</dbReference>
<dbReference type="GO" id="GO:0070374">
    <property type="term" value="P:positive regulation of ERK1 and ERK2 cascade"/>
    <property type="evidence" value="ECO:0000250"/>
    <property type="project" value="UniProtKB"/>
</dbReference>
<dbReference type="GO" id="GO:0045821">
    <property type="term" value="P:positive regulation of glycolytic process"/>
    <property type="evidence" value="ECO:0000250"/>
    <property type="project" value="UniProtKB"/>
</dbReference>
<dbReference type="CDD" id="cd02970">
    <property type="entry name" value="PRX_like2"/>
    <property type="match status" value="1"/>
</dbReference>
<dbReference type="Gene3D" id="3.40.30.10">
    <property type="entry name" value="Glutaredoxin"/>
    <property type="match status" value="1"/>
</dbReference>
<dbReference type="InterPro" id="IPR032801">
    <property type="entry name" value="PXL2A/B/C"/>
</dbReference>
<dbReference type="InterPro" id="IPR036249">
    <property type="entry name" value="Thioredoxin-like_sf"/>
</dbReference>
<dbReference type="PANTHER" id="PTHR28630">
    <property type="match status" value="1"/>
</dbReference>
<dbReference type="PANTHER" id="PTHR28630:SF3">
    <property type="entry name" value="PEROXIREDOXIN-LIKE 2C"/>
    <property type="match status" value="1"/>
</dbReference>
<dbReference type="Pfam" id="PF13911">
    <property type="entry name" value="AhpC-TSA_2"/>
    <property type="match status" value="1"/>
</dbReference>
<dbReference type="SUPFAM" id="SSF52833">
    <property type="entry name" value="Thioredoxin-like"/>
    <property type="match status" value="1"/>
</dbReference>
<proteinExistence type="evidence at transcript level"/>
<evidence type="ECO:0000250" key="1">
    <source>
        <dbReference type="UniProtKB" id="Q7RTV5"/>
    </source>
</evidence>
<evidence type="ECO:0000256" key="2">
    <source>
        <dbReference type="SAM" id="MobiDB-lite"/>
    </source>
</evidence>
<evidence type="ECO:0000305" key="3"/>
<sequence length="226" mass="24904">MAAPVTRQVSGCAGRVPSPAGSVTERGQPLAAAVAELPVLDASGRRVTFGALFRERRAVVVFVRHFLCYVCKEYVEDLAKIPKSVLREADVTLIVIGQSSYHHIEPFCKLTGYSHEIYVDPEREIYKRLGMKRGEEISSSGQSPHIKSNLLSGSLQSLWRAVTGPLFDFQGDPAQQGGTLILGPGNNIHFVHRDRNRLDHKPINSVLQLVGVQPVNFMSRPTVIHV</sequence>
<comment type="function">
    <text evidence="1">May positively regulate ERK1/2 signaling and AKT1 activation leading to HIF1A up-regulation with an increased expression of glycolysis genes and enhanced glycolysis.</text>
</comment>
<comment type="similarity">
    <text evidence="3">Belongs to the peroxiredoxin-like PRXL2 family. PRXL2C subfamily.</text>
</comment>